<name>UPP_KLEP7</name>
<proteinExistence type="evidence at protein level"/>
<reference key="1">
    <citation type="submission" date="2006-09" db="EMBL/GenBank/DDBJ databases">
        <authorList>
            <consortium name="The Klebsiella pneumonia Genome Sequencing Project"/>
            <person name="McClelland M."/>
            <person name="Sanderson E.K."/>
            <person name="Spieth J."/>
            <person name="Clifton W.S."/>
            <person name="Latreille P."/>
            <person name="Sabo A."/>
            <person name="Pepin K."/>
            <person name="Bhonagiri V."/>
            <person name="Porwollik S."/>
            <person name="Ali J."/>
            <person name="Wilson R.K."/>
        </authorList>
    </citation>
    <scope>NUCLEOTIDE SEQUENCE [LARGE SCALE GENOMIC DNA]</scope>
    <source>
        <strain>ATCC 700721 / MGH 78578</strain>
    </source>
</reference>
<feature type="chain" id="PRO_1000053727" description="Uracil phosphoribosyltransferase">
    <location>
        <begin position="1"/>
        <end position="208"/>
    </location>
</feature>
<feature type="binding site" evidence="1">
    <location>
        <position position="78"/>
    </location>
    <ligand>
        <name>5-phospho-alpha-D-ribose 1-diphosphate</name>
        <dbReference type="ChEBI" id="CHEBI:58017"/>
    </ligand>
</feature>
<feature type="binding site" evidence="1">
    <location>
        <position position="103"/>
    </location>
    <ligand>
        <name>5-phospho-alpha-D-ribose 1-diphosphate</name>
        <dbReference type="ChEBI" id="CHEBI:58017"/>
    </ligand>
</feature>
<feature type="binding site" evidence="1">
    <location>
        <begin position="130"/>
        <end position="138"/>
    </location>
    <ligand>
        <name>5-phospho-alpha-D-ribose 1-diphosphate</name>
        <dbReference type="ChEBI" id="CHEBI:58017"/>
    </ligand>
</feature>
<feature type="binding site" evidence="1">
    <location>
        <position position="193"/>
    </location>
    <ligand>
        <name>uracil</name>
        <dbReference type="ChEBI" id="CHEBI:17568"/>
    </ligand>
</feature>
<feature type="binding site" evidence="1">
    <location>
        <begin position="198"/>
        <end position="200"/>
    </location>
    <ligand>
        <name>uracil</name>
        <dbReference type="ChEBI" id="CHEBI:17568"/>
    </ligand>
</feature>
<feature type="binding site" evidence="1">
    <location>
        <position position="199"/>
    </location>
    <ligand>
        <name>5-phospho-alpha-D-ribose 1-diphosphate</name>
        <dbReference type="ChEBI" id="CHEBI:58017"/>
    </ligand>
</feature>
<feature type="strand" evidence="2">
    <location>
        <begin position="2"/>
        <end position="5"/>
    </location>
</feature>
<feature type="helix" evidence="2">
    <location>
        <begin position="9"/>
        <end position="18"/>
    </location>
</feature>
<feature type="helix" evidence="2">
    <location>
        <begin position="25"/>
        <end position="43"/>
    </location>
</feature>
<feature type="turn" evidence="2">
    <location>
        <begin position="44"/>
        <end position="46"/>
    </location>
</feature>
<feature type="strand" evidence="2">
    <location>
        <begin position="49"/>
        <end position="56"/>
    </location>
</feature>
<feature type="strand" evidence="2">
    <location>
        <begin position="59"/>
        <end position="66"/>
    </location>
</feature>
<feature type="strand" evidence="2">
    <location>
        <begin position="72"/>
        <end position="77"/>
    </location>
</feature>
<feature type="turn" evidence="2">
    <location>
        <begin position="78"/>
        <end position="80"/>
    </location>
</feature>
<feature type="helix" evidence="2">
    <location>
        <begin position="81"/>
        <end position="88"/>
    </location>
</feature>
<feature type="strand" evidence="2">
    <location>
        <begin position="98"/>
        <end position="103"/>
    </location>
</feature>
<feature type="turn" evidence="2">
    <location>
        <begin position="105"/>
        <end position="107"/>
    </location>
</feature>
<feature type="strand" evidence="2">
    <location>
        <begin position="110"/>
        <end position="116"/>
    </location>
</feature>
<feature type="helix" evidence="2">
    <location>
        <begin position="121"/>
        <end position="123"/>
    </location>
</feature>
<feature type="strand" evidence="2">
    <location>
        <begin position="124"/>
        <end position="129"/>
    </location>
</feature>
<feature type="strand" evidence="2">
    <location>
        <begin position="131"/>
        <end position="136"/>
    </location>
</feature>
<feature type="helix" evidence="2">
    <location>
        <begin position="137"/>
        <end position="148"/>
    </location>
</feature>
<feature type="strand" evidence="2">
    <location>
        <begin position="153"/>
        <end position="161"/>
    </location>
</feature>
<feature type="helix" evidence="2">
    <location>
        <begin position="163"/>
        <end position="172"/>
    </location>
</feature>
<feature type="strand" evidence="2">
    <location>
        <begin position="176"/>
        <end position="181"/>
    </location>
</feature>
<feature type="strand" evidence="2">
    <location>
        <begin position="185"/>
        <end position="187"/>
    </location>
</feature>
<feature type="strand" evidence="2">
    <location>
        <begin position="193"/>
        <end position="196"/>
    </location>
</feature>
<feature type="helix" evidence="2">
    <location>
        <begin position="200"/>
        <end position="205"/>
    </location>
</feature>
<protein>
    <recommendedName>
        <fullName evidence="1">Uracil phosphoribosyltransferase</fullName>
        <ecNumber evidence="1">2.4.2.9</ecNumber>
    </recommendedName>
    <alternativeName>
        <fullName evidence="1">UMP pyrophosphorylase</fullName>
    </alternativeName>
    <alternativeName>
        <fullName evidence="1">UPRTase</fullName>
    </alternativeName>
</protein>
<organism>
    <name type="scientific">Klebsiella pneumoniae subsp. pneumoniae (strain ATCC 700721 / MGH 78578)</name>
    <dbReference type="NCBI Taxonomy" id="272620"/>
    <lineage>
        <taxon>Bacteria</taxon>
        <taxon>Pseudomonadati</taxon>
        <taxon>Pseudomonadota</taxon>
        <taxon>Gammaproteobacteria</taxon>
        <taxon>Enterobacterales</taxon>
        <taxon>Enterobacteriaceae</taxon>
        <taxon>Klebsiella/Raoultella group</taxon>
        <taxon>Klebsiella</taxon>
        <taxon>Klebsiella pneumoniae complex</taxon>
    </lineage>
</organism>
<evidence type="ECO:0000255" key="1">
    <source>
        <dbReference type="HAMAP-Rule" id="MF_01218"/>
    </source>
</evidence>
<evidence type="ECO:0007829" key="2">
    <source>
        <dbReference type="PDB" id="6WN8"/>
    </source>
</evidence>
<accession>A6TCB0</accession>
<dbReference type="EC" id="2.4.2.9" evidence="1"/>
<dbReference type="EMBL" id="CP000647">
    <property type="protein sequence ID" value="ABR78231.1"/>
    <property type="molecule type" value="Genomic_DNA"/>
</dbReference>
<dbReference type="RefSeq" id="WP_002913827.1">
    <property type="nucleotide sequence ID" value="NC_009648.1"/>
</dbReference>
<dbReference type="PDB" id="6WN8">
    <property type="method" value="X-ray"/>
    <property type="resolution" value="2.70 A"/>
    <property type="chains" value="A/B/C/D/E/F/G/H/I/J=1-208"/>
</dbReference>
<dbReference type="PDBsum" id="6WN8"/>
<dbReference type="SMR" id="A6TCB0"/>
<dbReference type="STRING" id="272620.KPN_02821"/>
<dbReference type="jPOST" id="A6TCB0"/>
<dbReference type="PaxDb" id="272620-KPN_02821"/>
<dbReference type="EnsemblBacteria" id="ABR78231">
    <property type="protein sequence ID" value="ABR78231"/>
    <property type="gene ID" value="KPN_02821"/>
</dbReference>
<dbReference type="KEGG" id="kpn:KPN_02821"/>
<dbReference type="HOGENOM" id="CLU_067096_2_2_6"/>
<dbReference type="UniPathway" id="UPA00574">
    <property type="reaction ID" value="UER00636"/>
</dbReference>
<dbReference type="Proteomes" id="UP000000265">
    <property type="component" value="Chromosome"/>
</dbReference>
<dbReference type="GO" id="GO:0005525">
    <property type="term" value="F:GTP binding"/>
    <property type="evidence" value="ECO:0007669"/>
    <property type="project" value="UniProtKB-KW"/>
</dbReference>
<dbReference type="GO" id="GO:0000287">
    <property type="term" value="F:magnesium ion binding"/>
    <property type="evidence" value="ECO:0007669"/>
    <property type="project" value="UniProtKB-UniRule"/>
</dbReference>
<dbReference type="GO" id="GO:0004845">
    <property type="term" value="F:uracil phosphoribosyltransferase activity"/>
    <property type="evidence" value="ECO:0007669"/>
    <property type="project" value="UniProtKB-UniRule"/>
</dbReference>
<dbReference type="GO" id="GO:0044206">
    <property type="term" value="P:UMP salvage"/>
    <property type="evidence" value="ECO:0007669"/>
    <property type="project" value="UniProtKB-UniRule"/>
</dbReference>
<dbReference type="GO" id="GO:0006223">
    <property type="term" value="P:uracil salvage"/>
    <property type="evidence" value="ECO:0007669"/>
    <property type="project" value="InterPro"/>
</dbReference>
<dbReference type="CDD" id="cd06223">
    <property type="entry name" value="PRTases_typeI"/>
    <property type="match status" value="1"/>
</dbReference>
<dbReference type="FunFam" id="3.40.50.2020:FF:000003">
    <property type="entry name" value="Uracil phosphoribosyltransferase"/>
    <property type="match status" value="1"/>
</dbReference>
<dbReference type="Gene3D" id="3.40.50.2020">
    <property type="match status" value="1"/>
</dbReference>
<dbReference type="HAMAP" id="MF_01218_B">
    <property type="entry name" value="Upp_B"/>
    <property type="match status" value="1"/>
</dbReference>
<dbReference type="InterPro" id="IPR000836">
    <property type="entry name" value="PRibTrfase_dom"/>
</dbReference>
<dbReference type="InterPro" id="IPR029057">
    <property type="entry name" value="PRTase-like"/>
</dbReference>
<dbReference type="InterPro" id="IPR034332">
    <property type="entry name" value="Upp_B"/>
</dbReference>
<dbReference type="InterPro" id="IPR050054">
    <property type="entry name" value="UPRTase/APRTase"/>
</dbReference>
<dbReference type="InterPro" id="IPR005765">
    <property type="entry name" value="Ura_phspho_trans"/>
</dbReference>
<dbReference type="NCBIfam" id="NF001097">
    <property type="entry name" value="PRK00129.1"/>
    <property type="match status" value="1"/>
</dbReference>
<dbReference type="NCBIfam" id="TIGR01091">
    <property type="entry name" value="upp"/>
    <property type="match status" value="1"/>
</dbReference>
<dbReference type="PANTHER" id="PTHR32315">
    <property type="entry name" value="ADENINE PHOSPHORIBOSYLTRANSFERASE"/>
    <property type="match status" value="1"/>
</dbReference>
<dbReference type="PANTHER" id="PTHR32315:SF4">
    <property type="entry name" value="URACIL PHOSPHORIBOSYLTRANSFERASE, CHLOROPLASTIC"/>
    <property type="match status" value="1"/>
</dbReference>
<dbReference type="Pfam" id="PF14681">
    <property type="entry name" value="UPRTase"/>
    <property type="match status" value="1"/>
</dbReference>
<dbReference type="SUPFAM" id="SSF53271">
    <property type="entry name" value="PRTase-like"/>
    <property type="match status" value="1"/>
</dbReference>
<keyword id="KW-0002">3D-structure</keyword>
<keyword id="KW-0021">Allosteric enzyme</keyword>
<keyword id="KW-0328">Glycosyltransferase</keyword>
<keyword id="KW-0342">GTP-binding</keyword>
<keyword id="KW-0460">Magnesium</keyword>
<keyword id="KW-0547">Nucleotide-binding</keyword>
<keyword id="KW-0808">Transferase</keyword>
<comment type="function">
    <text evidence="1">Catalyzes the conversion of uracil and 5-phospho-alpha-D-ribose 1-diphosphate (PRPP) to UMP and diphosphate.</text>
</comment>
<comment type="catalytic activity">
    <reaction evidence="1">
        <text>UMP + diphosphate = 5-phospho-alpha-D-ribose 1-diphosphate + uracil</text>
        <dbReference type="Rhea" id="RHEA:13017"/>
        <dbReference type="ChEBI" id="CHEBI:17568"/>
        <dbReference type="ChEBI" id="CHEBI:33019"/>
        <dbReference type="ChEBI" id="CHEBI:57865"/>
        <dbReference type="ChEBI" id="CHEBI:58017"/>
        <dbReference type="EC" id="2.4.2.9"/>
    </reaction>
</comment>
<comment type="cofactor">
    <cofactor evidence="1">
        <name>Mg(2+)</name>
        <dbReference type="ChEBI" id="CHEBI:18420"/>
    </cofactor>
    <text evidence="1">Binds 1 Mg(2+) ion per subunit. The magnesium is bound as Mg-PRPP.</text>
</comment>
<comment type="activity regulation">
    <text evidence="1">Allosterically activated by GTP.</text>
</comment>
<comment type="pathway">
    <text evidence="1">Pyrimidine metabolism; UMP biosynthesis via salvage pathway; UMP from uracil: step 1/1.</text>
</comment>
<comment type="similarity">
    <text evidence="1">Belongs to the UPRTase family.</text>
</comment>
<sequence length="208" mass="22565">MKIVEVKHPLVKHKLGLMREHDISTKRFRELASEVGSLLTYEATADLETEKVTIEGWNGPVEVEQIKGKKITVVPILRAGLGMMEGVLEHVPSARISVVGIYRNEETLEPVPYFQKLVSNIDERMALVVDPMLATGGSMIATIDLLKNAGCTSIKVLVLVAAPEGIAALEKAHPDVELYTASVDKGLNEHGYIIPGLGDAGDKIFGTK</sequence>
<gene>
    <name evidence="1" type="primary">upp</name>
    <name type="ordered locus">KPN78578_27700</name>
    <name type="ORF">KPN_02821</name>
</gene>